<name>APT_MASNA</name>
<comment type="function">
    <text evidence="1">Catalyzes a salvage reaction resulting in the formation of AMP, that is energically less costly than de novo synthesis.</text>
</comment>
<comment type="catalytic activity">
    <reaction evidence="1">
        <text>AMP + diphosphate = 5-phospho-alpha-D-ribose 1-diphosphate + adenine</text>
        <dbReference type="Rhea" id="RHEA:16609"/>
        <dbReference type="ChEBI" id="CHEBI:16708"/>
        <dbReference type="ChEBI" id="CHEBI:33019"/>
        <dbReference type="ChEBI" id="CHEBI:58017"/>
        <dbReference type="ChEBI" id="CHEBI:456215"/>
        <dbReference type="EC" id="2.4.2.7"/>
    </reaction>
</comment>
<comment type="pathway">
    <text evidence="1">Purine metabolism; AMP biosynthesis via salvage pathway; AMP from adenine: step 1/1.</text>
</comment>
<comment type="subunit">
    <text>Homodimer.</text>
</comment>
<comment type="subcellular location">
    <subcellularLocation>
        <location>Cytoplasm</location>
    </subcellularLocation>
</comment>
<comment type="similarity">
    <text evidence="3">Belongs to the purine/pyrimidine phosphoribosyltransferase family.</text>
</comment>
<dbReference type="EC" id="2.4.2.7" evidence="1"/>
<dbReference type="EMBL" id="U28722">
    <property type="protein sequence ID" value="AAA68956.1"/>
    <property type="molecule type" value="Genomic_DNA"/>
</dbReference>
<dbReference type="SMR" id="Q64427"/>
<dbReference type="UniPathway" id="UPA00588">
    <property type="reaction ID" value="UER00646"/>
</dbReference>
<dbReference type="GO" id="GO:0005737">
    <property type="term" value="C:cytoplasm"/>
    <property type="evidence" value="ECO:0007669"/>
    <property type="project" value="UniProtKB-SubCell"/>
</dbReference>
<dbReference type="GO" id="GO:0002055">
    <property type="term" value="F:adenine binding"/>
    <property type="evidence" value="ECO:0007669"/>
    <property type="project" value="TreeGrafter"/>
</dbReference>
<dbReference type="GO" id="GO:0003999">
    <property type="term" value="F:adenine phosphoribosyltransferase activity"/>
    <property type="evidence" value="ECO:0000250"/>
    <property type="project" value="UniProtKB"/>
</dbReference>
<dbReference type="GO" id="GO:0016208">
    <property type="term" value="F:AMP binding"/>
    <property type="evidence" value="ECO:0007669"/>
    <property type="project" value="TreeGrafter"/>
</dbReference>
<dbReference type="GO" id="GO:0006168">
    <property type="term" value="P:adenine salvage"/>
    <property type="evidence" value="ECO:0007669"/>
    <property type="project" value="InterPro"/>
</dbReference>
<dbReference type="GO" id="GO:0044209">
    <property type="term" value="P:AMP salvage"/>
    <property type="evidence" value="ECO:0007669"/>
    <property type="project" value="UniProtKB-UniPathway"/>
</dbReference>
<dbReference type="GO" id="GO:0006166">
    <property type="term" value="P:purine ribonucleoside salvage"/>
    <property type="evidence" value="ECO:0007669"/>
    <property type="project" value="UniProtKB-KW"/>
</dbReference>
<dbReference type="CDD" id="cd06223">
    <property type="entry name" value="PRTases_typeI"/>
    <property type="match status" value="1"/>
</dbReference>
<dbReference type="FunFam" id="3.40.50.2020:FF:000123">
    <property type="entry name" value="Adenine phosphoribosyltransferase"/>
    <property type="match status" value="1"/>
</dbReference>
<dbReference type="Gene3D" id="3.40.50.2020">
    <property type="match status" value="1"/>
</dbReference>
<dbReference type="HAMAP" id="MF_00004">
    <property type="entry name" value="Aden_phosphoribosyltr"/>
    <property type="match status" value="1"/>
</dbReference>
<dbReference type="InterPro" id="IPR005764">
    <property type="entry name" value="Ade_phspho_trans"/>
</dbReference>
<dbReference type="InterPro" id="IPR000836">
    <property type="entry name" value="PRibTrfase_dom"/>
</dbReference>
<dbReference type="InterPro" id="IPR029057">
    <property type="entry name" value="PRTase-like"/>
</dbReference>
<dbReference type="InterPro" id="IPR050054">
    <property type="entry name" value="UPRTase/APRTase"/>
</dbReference>
<dbReference type="NCBIfam" id="TIGR01090">
    <property type="entry name" value="apt"/>
    <property type="match status" value="1"/>
</dbReference>
<dbReference type="NCBIfam" id="NF002634">
    <property type="entry name" value="PRK02304.1-3"/>
    <property type="match status" value="1"/>
</dbReference>
<dbReference type="NCBIfam" id="NF002636">
    <property type="entry name" value="PRK02304.1-5"/>
    <property type="match status" value="1"/>
</dbReference>
<dbReference type="PANTHER" id="PTHR32315">
    <property type="entry name" value="ADENINE PHOSPHORIBOSYLTRANSFERASE"/>
    <property type="match status" value="1"/>
</dbReference>
<dbReference type="PANTHER" id="PTHR32315:SF3">
    <property type="entry name" value="ADENINE PHOSPHORIBOSYLTRANSFERASE"/>
    <property type="match status" value="1"/>
</dbReference>
<dbReference type="Pfam" id="PF00156">
    <property type="entry name" value="Pribosyltran"/>
    <property type="match status" value="1"/>
</dbReference>
<dbReference type="SUPFAM" id="SSF53271">
    <property type="entry name" value="PRTase-like"/>
    <property type="match status" value="1"/>
</dbReference>
<dbReference type="PROSITE" id="PS00103">
    <property type="entry name" value="PUR_PYR_PR_TRANSFER"/>
    <property type="match status" value="1"/>
</dbReference>
<organism>
    <name type="scientific">Mastomys natalensis</name>
    <name type="common">African soft-furred rat</name>
    <name type="synonym">Praomys natalensis</name>
    <dbReference type="NCBI Taxonomy" id="10112"/>
    <lineage>
        <taxon>Eukaryota</taxon>
        <taxon>Metazoa</taxon>
        <taxon>Chordata</taxon>
        <taxon>Craniata</taxon>
        <taxon>Vertebrata</taxon>
        <taxon>Euteleostomi</taxon>
        <taxon>Mammalia</taxon>
        <taxon>Eutheria</taxon>
        <taxon>Euarchontoglires</taxon>
        <taxon>Glires</taxon>
        <taxon>Rodentia</taxon>
        <taxon>Myomorpha</taxon>
        <taxon>Muroidea</taxon>
        <taxon>Muridae</taxon>
        <taxon>Murinae</taxon>
        <taxon>Mastomys</taxon>
    </lineage>
</organism>
<reference key="1">
    <citation type="journal article" date="1997" name="Heredity">
        <title>Substitution rate variation in closely related rodent species.</title>
        <authorList>
            <person name="Fieldhouse D."/>
            <person name="Yazdani F."/>
            <person name="Golding G.B."/>
        </authorList>
    </citation>
    <scope>NUCLEOTIDE SEQUENCE [GENOMIC DNA]</scope>
</reference>
<evidence type="ECO:0000250" key="1">
    <source>
        <dbReference type="UniProtKB" id="P07741"/>
    </source>
</evidence>
<evidence type="ECO:0000250" key="2">
    <source>
        <dbReference type="UniProtKB" id="P36972"/>
    </source>
</evidence>
<evidence type="ECO:0000305" key="3"/>
<sequence>MSEPELQLVARRIRSFPDFPIPGVLFRDISPLLKDPDSFRASIRLLASHLKSLHGGKIDYIAGLDSRGFLFGPSLAQELGVGCVLIRKRGKLPGPTLSASYALEYGKAELEIQKDALEPGQRVVIVDDLLATGGTMCAACELLNQLRAEVVECVSLVELTSLKGRERLGPIPFFSLLQYD</sequence>
<gene>
    <name evidence="1" type="primary">APRT</name>
</gene>
<proteinExistence type="inferred from homology"/>
<keyword id="KW-0007">Acetylation</keyword>
<keyword id="KW-0963">Cytoplasm</keyword>
<keyword id="KW-0328">Glycosyltransferase</keyword>
<keyword id="KW-0597">Phosphoprotein</keyword>
<keyword id="KW-0660">Purine salvage</keyword>
<keyword id="KW-0808">Transferase</keyword>
<protein>
    <recommendedName>
        <fullName evidence="1">Adenine phosphoribosyltransferase</fullName>
        <shortName>APRT</shortName>
        <ecNumber evidence="1">2.4.2.7</ecNumber>
    </recommendedName>
</protein>
<feature type="initiator methionine" description="Removed" evidence="2">
    <location>
        <position position="1"/>
    </location>
</feature>
<feature type="chain" id="PRO_0000149505" description="Adenine phosphoribosyltransferase">
    <location>
        <begin position="2"/>
        <end position="180"/>
    </location>
</feature>
<feature type="modified residue" description="N-acetylserine" evidence="2">
    <location>
        <position position="2"/>
    </location>
</feature>
<feature type="modified residue" description="Phosphoserine" evidence="1">
    <location>
        <position position="15"/>
    </location>
</feature>
<feature type="modified residue" description="Phosphoserine" evidence="1">
    <location>
        <position position="30"/>
    </location>
</feature>
<feature type="modified residue" description="Phosphotyrosine" evidence="1">
    <location>
        <position position="60"/>
    </location>
</feature>
<feature type="modified residue" description="Phosphoserine" evidence="1">
    <location>
        <position position="66"/>
    </location>
</feature>
<feature type="modified residue" description="N6-acetyllysine" evidence="1">
    <location>
        <position position="114"/>
    </location>
</feature>
<feature type="modified residue" description="Phosphothreonine" evidence="1">
    <location>
        <position position="135"/>
    </location>
</feature>
<accession>Q64427</accession>